<protein>
    <recommendedName>
        <fullName evidence="1">Formate-dependent phosphoribosylglycinamide formyltransferase</fullName>
        <ecNumber evidence="1">6.3.1.21</ecNumber>
    </recommendedName>
    <alternativeName>
        <fullName evidence="1">5'-phosphoribosylglycinamide transformylase 2</fullName>
    </alternativeName>
    <alternativeName>
        <fullName evidence="1">Formate-dependent GAR transformylase</fullName>
    </alternativeName>
    <alternativeName>
        <fullName evidence="1">GAR transformylase 2</fullName>
        <shortName evidence="1">GART 2</shortName>
    </alternativeName>
    <alternativeName>
        <fullName evidence="1">Non-folate glycinamide ribonucleotide transformylase</fullName>
    </alternativeName>
    <alternativeName>
        <fullName evidence="1">Phosphoribosylglycinamide formyltransferase 2</fullName>
    </alternativeName>
</protein>
<evidence type="ECO:0000255" key="1">
    <source>
        <dbReference type="HAMAP-Rule" id="MF_01643"/>
    </source>
</evidence>
<sequence length="388" mass="43202">MKKILLLGSGELGKEFVISAQRKGQHIIACDSYAGAPAMQVADECEVFDMLNGEELERIVKKHRPDIIVPEIEAIRTERLYDFEKEGIQVVPSARAVNYTMNRKAIRDLAAKELGLKTAKYYYAKSLEELKEAAEKIGFPCVVKPLMSSSGKGQSLVKSAAELEHAWEYGCNGSRGDIRELIIEEFIKFDSEITLLTVTQKNGPTLFCPPIGHVQKGGDYRESFQPAHIDPAHLKEAEDMAEKVTRALTGAGLWGVEFFLSHENGVYFSELSPRPHDTGMVTLAGTQNLNEFELHLRAVLGLPIPGIKQERIGASAVILSPIASQERPQYRGMEEVTGEEDTYLRIFGKPYTRVNRRMGVVLCYAPNGSDLDALRDKAKRIADKVEVY</sequence>
<proteinExistence type="inferred from homology"/>
<accession>Q5LD90</accession>
<organism>
    <name type="scientific">Bacteroides fragilis (strain ATCC 25285 / DSM 2151 / CCUG 4856 / JCM 11019 / LMG 10263 / NCTC 9343 / Onslow / VPI 2553 / EN-2)</name>
    <dbReference type="NCBI Taxonomy" id="272559"/>
    <lineage>
        <taxon>Bacteria</taxon>
        <taxon>Pseudomonadati</taxon>
        <taxon>Bacteroidota</taxon>
        <taxon>Bacteroidia</taxon>
        <taxon>Bacteroidales</taxon>
        <taxon>Bacteroidaceae</taxon>
        <taxon>Bacteroides</taxon>
    </lineage>
</organism>
<gene>
    <name evidence="1" type="primary">purT</name>
    <name type="ordered locus">BF2226</name>
</gene>
<reference key="1">
    <citation type="journal article" date="2005" name="Science">
        <title>Extensive DNA inversions in the B. fragilis genome control variable gene expression.</title>
        <authorList>
            <person name="Cerdeno-Tarraga A.-M."/>
            <person name="Patrick S."/>
            <person name="Crossman L.C."/>
            <person name="Blakely G."/>
            <person name="Abratt V."/>
            <person name="Lennard N."/>
            <person name="Poxton I."/>
            <person name="Duerden B."/>
            <person name="Harris B."/>
            <person name="Quail M.A."/>
            <person name="Barron A."/>
            <person name="Clark L."/>
            <person name="Corton C."/>
            <person name="Doggett J."/>
            <person name="Holden M.T.G."/>
            <person name="Larke N."/>
            <person name="Line A."/>
            <person name="Lord A."/>
            <person name="Norbertczak H."/>
            <person name="Ormond D."/>
            <person name="Price C."/>
            <person name="Rabbinowitsch E."/>
            <person name="Woodward J."/>
            <person name="Barrell B.G."/>
            <person name="Parkhill J."/>
        </authorList>
    </citation>
    <scope>NUCLEOTIDE SEQUENCE [LARGE SCALE GENOMIC DNA]</scope>
    <source>
        <strain>ATCC 25285 / DSM 2151 / CCUG 4856 / JCM 11019 / LMG 10263 / NCTC 9343 / Onslow / VPI 2553 / EN-2</strain>
    </source>
</reference>
<keyword id="KW-0067">ATP-binding</keyword>
<keyword id="KW-0436">Ligase</keyword>
<keyword id="KW-0460">Magnesium</keyword>
<keyword id="KW-0479">Metal-binding</keyword>
<keyword id="KW-0547">Nucleotide-binding</keyword>
<keyword id="KW-0658">Purine biosynthesis</keyword>
<feature type="chain" id="PRO_0000319125" description="Formate-dependent phosphoribosylglycinamide formyltransferase">
    <location>
        <begin position="1"/>
        <end position="388"/>
    </location>
</feature>
<feature type="domain" description="ATP-grasp" evidence="1">
    <location>
        <begin position="108"/>
        <end position="300"/>
    </location>
</feature>
<feature type="binding site" evidence="1">
    <location>
        <begin position="11"/>
        <end position="12"/>
    </location>
    <ligand>
        <name>N(1)-(5-phospho-beta-D-ribosyl)glycinamide</name>
        <dbReference type="ChEBI" id="CHEBI:143788"/>
    </ligand>
</feature>
<feature type="binding site" evidence="1">
    <location>
        <position position="71"/>
    </location>
    <ligand>
        <name>N(1)-(5-phospho-beta-D-ribosyl)glycinamide</name>
        <dbReference type="ChEBI" id="CHEBI:143788"/>
    </ligand>
</feature>
<feature type="binding site" evidence="1">
    <location>
        <position position="103"/>
    </location>
    <ligand>
        <name>ATP</name>
        <dbReference type="ChEBI" id="CHEBI:30616"/>
    </ligand>
</feature>
<feature type="binding site" evidence="1">
    <location>
        <position position="144"/>
    </location>
    <ligand>
        <name>ATP</name>
        <dbReference type="ChEBI" id="CHEBI:30616"/>
    </ligand>
</feature>
<feature type="binding site" evidence="1">
    <location>
        <begin position="149"/>
        <end position="154"/>
    </location>
    <ligand>
        <name>ATP</name>
        <dbReference type="ChEBI" id="CHEBI:30616"/>
    </ligand>
</feature>
<feature type="binding site" evidence="1">
    <location>
        <begin position="184"/>
        <end position="187"/>
    </location>
    <ligand>
        <name>ATP</name>
        <dbReference type="ChEBI" id="CHEBI:30616"/>
    </ligand>
</feature>
<feature type="binding site" evidence="1">
    <location>
        <position position="192"/>
    </location>
    <ligand>
        <name>ATP</name>
        <dbReference type="ChEBI" id="CHEBI:30616"/>
    </ligand>
</feature>
<feature type="binding site" evidence="1">
    <location>
        <position position="257"/>
    </location>
    <ligand>
        <name>Mg(2+)</name>
        <dbReference type="ChEBI" id="CHEBI:18420"/>
    </ligand>
</feature>
<feature type="binding site" evidence="1">
    <location>
        <position position="270"/>
    </location>
    <ligand>
        <name>Mg(2+)</name>
        <dbReference type="ChEBI" id="CHEBI:18420"/>
    </ligand>
</feature>
<feature type="binding site" evidence="1">
    <location>
        <position position="277"/>
    </location>
    <ligand>
        <name>N(1)-(5-phospho-beta-D-ribosyl)glycinamide</name>
        <dbReference type="ChEBI" id="CHEBI:143788"/>
    </ligand>
</feature>
<feature type="binding site" evidence="1">
    <location>
        <position position="349"/>
    </location>
    <ligand>
        <name>N(1)-(5-phospho-beta-D-ribosyl)glycinamide</name>
        <dbReference type="ChEBI" id="CHEBI:143788"/>
    </ligand>
</feature>
<feature type="binding site" evidence="1">
    <location>
        <begin position="356"/>
        <end position="357"/>
    </location>
    <ligand>
        <name>N(1)-(5-phospho-beta-D-ribosyl)glycinamide</name>
        <dbReference type="ChEBI" id="CHEBI:143788"/>
    </ligand>
</feature>
<name>PURT_BACFN</name>
<comment type="function">
    <text evidence="1">Involved in the de novo purine biosynthesis. Catalyzes the transfer of formate to 5-phospho-ribosyl-glycinamide (GAR), producing 5-phospho-ribosyl-N-formylglycinamide (FGAR). Formate is provided by PurU via hydrolysis of 10-formyl-tetrahydrofolate.</text>
</comment>
<comment type="catalytic activity">
    <reaction evidence="1">
        <text>N(1)-(5-phospho-beta-D-ribosyl)glycinamide + formate + ATP = N(2)-formyl-N(1)-(5-phospho-beta-D-ribosyl)glycinamide + ADP + phosphate + H(+)</text>
        <dbReference type="Rhea" id="RHEA:24829"/>
        <dbReference type="ChEBI" id="CHEBI:15378"/>
        <dbReference type="ChEBI" id="CHEBI:15740"/>
        <dbReference type="ChEBI" id="CHEBI:30616"/>
        <dbReference type="ChEBI" id="CHEBI:43474"/>
        <dbReference type="ChEBI" id="CHEBI:143788"/>
        <dbReference type="ChEBI" id="CHEBI:147286"/>
        <dbReference type="ChEBI" id="CHEBI:456216"/>
        <dbReference type="EC" id="6.3.1.21"/>
    </reaction>
    <physiologicalReaction direction="left-to-right" evidence="1">
        <dbReference type="Rhea" id="RHEA:24830"/>
    </physiologicalReaction>
</comment>
<comment type="pathway">
    <text evidence="1">Purine metabolism; IMP biosynthesis via de novo pathway; N(2)-formyl-N(1)-(5-phospho-D-ribosyl)glycinamide from N(1)-(5-phospho-D-ribosyl)glycinamide (formate route): step 1/1.</text>
</comment>
<comment type="subunit">
    <text evidence="1">Homodimer.</text>
</comment>
<comment type="similarity">
    <text evidence="1">Belongs to the PurK/PurT family.</text>
</comment>
<dbReference type="EC" id="6.3.1.21" evidence="1"/>
<dbReference type="EMBL" id="CR626927">
    <property type="protein sequence ID" value="CAH07920.1"/>
    <property type="molecule type" value="Genomic_DNA"/>
</dbReference>
<dbReference type="RefSeq" id="WP_005803416.1">
    <property type="nucleotide sequence ID" value="NZ_UFTH01000001.1"/>
</dbReference>
<dbReference type="SMR" id="Q5LD90"/>
<dbReference type="PaxDb" id="272559-BF9343_2139"/>
<dbReference type="GeneID" id="60368601"/>
<dbReference type="KEGG" id="bfs:BF9343_2139"/>
<dbReference type="eggNOG" id="COG0027">
    <property type="taxonomic scope" value="Bacteria"/>
</dbReference>
<dbReference type="HOGENOM" id="CLU_011534_1_3_10"/>
<dbReference type="UniPathway" id="UPA00074">
    <property type="reaction ID" value="UER00127"/>
</dbReference>
<dbReference type="Proteomes" id="UP000006731">
    <property type="component" value="Chromosome"/>
</dbReference>
<dbReference type="GO" id="GO:0005829">
    <property type="term" value="C:cytosol"/>
    <property type="evidence" value="ECO:0007669"/>
    <property type="project" value="TreeGrafter"/>
</dbReference>
<dbReference type="GO" id="GO:0005524">
    <property type="term" value="F:ATP binding"/>
    <property type="evidence" value="ECO:0007669"/>
    <property type="project" value="UniProtKB-UniRule"/>
</dbReference>
<dbReference type="GO" id="GO:0000287">
    <property type="term" value="F:magnesium ion binding"/>
    <property type="evidence" value="ECO:0007669"/>
    <property type="project" value="InterPro"/>
</dbReference>
<dbReference type="GO" id="GO:0043815">
    <property type="term" value="F:phosphoribosylglycinamide formyltransferase 2 activity"/>
    <property type="evidence" value="ECO:0007669"/>
    <property type="project" value="UniProtKB-UniRule"/>
</dbReference>
<dbReference type="GO" id="GO:0004644">
    <property type="term" value="F:phosphoribosylglycinamide formyltransferase activity"/>
    <property type="evidence" value="ECO:0007669"/>
    <property type="project" value="InterPro"/>
</dbReference>
<dbReference type="GO" id="GO:0006189">
    <property type="term" value="P:'de novo' IMP biosynthetic process"/>
    <property type="evidence" value="ECO:0007669"/>
    <property type="project" value="UniProtKB-UniRule"/>
</dbReference>
<dbReference type="FunFam" id="3.30.1490.20:FF:000013">
    <property type="entry name" value="Formate-dependent phosphoribosylglycinamide formyltransferase"/>
    <property type="match status" value="1"/>
</dbReference>
<dbReference type="FunFam" id="3.30.470.20:FF:000035">
    <property type="entry name" value="Formate-dependent phosphoribosylglycinamide formyltransferase"/>
    <property type="match status" value="1"/>
</dbReference>
<dbReference type="FunFam" id="3.40.50.20:FF:000022">
    <property type="entry name" value="Formate-dependent phosphoribosylglycinamide formyltransferase"/>
    <property type="match status" value="1"/>
</dbReference>
<dbReference type="Gene3D" id="3.40.50.20">
    <property type="match status" value="1"/>
</dbReference>
<dbReference type="Gene3D" id="3.30.1490.20">
    <property type="entry name" value="ATP-grasp fold, A domain"/>
    <property type="match status" value="1"/>
</dbReference>
<dbReference type="Gene3D" id="3.30.470.20">
    <property type="entry name" value="ATP-grasp fold, B domain"/>
    <property type="match status" value="1"/>
</dbReference>
<dbReference type="HAMAP" id="MF_01643">
    <property type="entry name" value="PurT"/>
    <property type="match status" value="1"/>
</dbReference>
<dbReference type="InterPro" id="IPR011761">
    <property type="entry name" value="ATP-grasp"/>
</dbReference>
<dbReference type="InterPro" id="IPR003135">
    <property type="entry name" value="ATP-grasp_carboxylate-amine"/>
</dbReference>
<dbReference type="InterPro" id="IPR013815">
    <property type="entry name" value="ATP_grasp_subdomain_1"/>
</dbReference>
<dbReference type="InterPro" id="IPR016185">
    <property type="entry name" value="PreATP-grasp_dom_sf"/>
</dbReference>
<dbReference type="InterPro" id="IPR005862">
    <property type="entry name" value="PurT"/>
</dbReference>
<dbReference type="InterPro" id="IPR054350">
    <property type="entry name" value="PurT/PurK_preATP-grasp"/>
</dbReference>
<dbReference type="InterPro" id="IPR048740">
    <property type="entry name" value="PurT_C"/>
</dbReference>
<dbReference type="InterPro" id="IPR011054">
    <property type="entry name" value="Rudment_hybrid_motif"/>
</dbReference>
<dbReference type="NCBIfam" id="NF006766">
    <property type="entry name" value="PRK09288.1"/>
    <property type="match status" value="1"/>
</dbReference>
<dbReference type="NCBIfam" id="TIGR01142">
    <property type="entry name" value="purT"/>
    <property type="match status" value="1"/>
</dbReference>
<dbReference type="PANTHER" id="PTHR43055">
    <property type="entry name" value="FORMATE-DEPENDENT PHOSPHORIBOSYLGLYCINAMIDE FORMYLTRANSFERASE"/>
    <property type="match status" value="1"/>
</dbReference>
<dbReference type="PANTHER" id="PTHR43055:SF1">
    <property type="entry name" value="FORMATE-DEPENDENT PHOSPHORIBOSYLGLYCINAMIDE FORMYLTRANSFERASE"/>
    <property type="match status" value="1"/>
</dbReference>
<dbReference type="Pfam" id="PF02222">
    <property type="entry name" value="ATP-grasp"/>
    <property type="match status" value="1"/>
</dbReference>
<dbReference type="Pfam" id="PF21244">
    <property type="entry name" value="PurT_C"/>
    <property type="match status" value="1"/>
</dbReference>
<dbReference type="Pfam" id="PF22660">
    <property type="entry name" value="RS_preATP-grasp-like"/>
    <property type="match status" value="1"/>
</dbReference>
<dbReference type="SUPFAM" id="SSF56059">
    <property type="entry name" value="Glutathione synthetase ATP-binding domain-like"/>
    <property type="match status" value="1"/>
</dbReference>
<dbReference type="SUPFAM" id="SSF52440">
    <property type="entry name" value="PreATP-grasp domain"/>
    <property type="match status" value="1"/>
</dbReference>
<dbReference type="SUPFAM" id="SSF51246">
    <property type="entry name" value="Rudiment single hybrid motif"/>
    <property type="match status" value="1"/>
</dbReference>
<dbReference type="PROSITE" id="PS50975">
    <property type="entry name" value="ATP_GRASP"/>
    <property type="match status" value="1"/>
</dbReference>